<reference key="1">
    <citation type="submission" date="2008-10" db="EMBL/GenBank/DDBJ databases">
        <title>Genome sequence of Bacillus cereus B4264.</title>
        <authorList>
            <person name="Dodson R.J."/>
            <person name="Durkin A.S."/>
            <person name="Rosovitz M.J."/>
            <person name="Rasko D.A."/>
            <person name="Hoffmaster A."/>
            <person name="Ravel J."/>
            <person name="Sutton G."/>
        </authorList>
    </citation>
    <scope>NUCLEOTIDE SEQUENCE [LARGE SCALE GENOMIC DNA]</scope>
    <source>
        <strain>B4264</strain>
    </source>
</reference>
<comment type="function">
    <text evidence="1">One of the primary rRNA binding proteins, it binds directly to 16S rRNA where it nucleates assembly of the body of the 30S subunit.</text>
</comment>
<comment type="function">
    <text evidence="1">With S5 and S12 plays an important role in translational accuracy.</text>
</comment>
<comment type="subunit">
    <text evidence="1">Part of the 30S ribosomal subunit. Contacts protein S5. The interaction surface between S4 and S5 is involved in control of translational fidelity.</text>
</comment>
<comment type="similarity">
    <text evidence="1">Belongs to the universal ribosomal protein uS4 family.</text>
</comment>
<keyword id="KW-0687">Ribonucleoprotein</keyword>
<keyword id="KW-0689">Ribosomal protein</keyword>
<keyword id="KW-0694">RNA-binding</keyword>
<keyword id="KW-0699">rRNA-binding</keyword>
<feature type="chain" id="PRO_1000140685" description="Small ribosomal subunit protein uS4">
    <location>
        <begin position="1"/>
        <end position="200"/>
    </location>
</feature>
<feature type="domain" description="S4 RNA-binding" evidence="1">
    <location>
        <begin position="92"/>
        <end position="152"/>
    </location>
</feature>
<feature type="region of interest" description="Disordered" evidence="2">
    <location>
        <begin position="22"/>
        <end position="42"/>
    </location>
</feature>
<organism>
    <name type="scientific">Bacillus cereus (strain B4264)</name>
    <dbReference type="NCBI Taxonomy" id="405532"/>
    <lineage>
        <taxon>Bacteria</taxon>
        <taxon>Bacillati</taxon>
        <taxon>Bacillota</taxon>
        <taxon>Bacilli</taxon>
        <taxon>Bacillales</taxon>
        <taxon>Bacillaceae</taxon>
        <taxon>Bacillus</taxon>
        <taxon>Bacillus cereus group</taxon>
    </lineage>
</organism>
<accession>B7H711</accession>
<sequence length="200" mass="22985">MARYTGPAWKLSRRLGISLSGTGKELEKRPYAPGPHGPNQRKKLSEYGLQLQEKQKLRHMYGMTERQFRRTFDQAGKMPGKHGENFMILLEARLDNLVYRMGLARTRRAARQLVNHGHIMVDGARVDIPSYRVKPGQTISVREKSNSLVVVKEAIEVNNFVPEYLTFDADKLEATYTRHAERSELPAEINEALIVEFYSR</sequence>
<evidence type="ECO:0000255" key="1">
    <source>
        <dbReference type="HAMAP-Rule" id="MF_01306"/>
    </source>
</evidence>
<evidence type="ECO:0000256" key="2">
    <source>
        <dbReference type="SAM" id="MobiDB-lite"/>
    </source>
</evidence>
<evidence type="ECO:0000305" key="3"/>
<dbReference type="EMBL" id="CP001176">
    <property type="protein sequence ID" value="ACK63321.1"/>
    <property type="molecule type" value="Genomic_DNA"/>
</dbReference>
<dbReference type="RefSeq" id="WP_000135317.1">
    <property type="nucleotide sequence ID" value="NZ_VEHB01000005.1"/>
</dbReference>
<dbReference type="SMR" id="B7H711"/>
<dbReference type="KEGG" id="bcb:BCB4264_A4764"/>
<dbReference type="HOGENOM" id="CLU_092403_0_1_9"/>
<dbReference type="Proteomes" id="UP000007096">
    <property type="component" value="Chromosome"/>
</dbReference>
<dbReference type="GO" id="GO:0015935">
    <property type="term" value="C:small ribosomal subunit"/>
    <property type="evidence" value="ECO:0007669"/>
    <property type="project" value="InterPro"/>
</dbReference>
<dbReference type="GO" id="GO:0019843">
    <property type="term" value="F:rRNA binding"/>
    <property type="evidence" value="ECO:0007669"/>
    <property type="project" value="UniProtKB-UniRule"/>
</dbReference>
<dbReference type="GO" id="GO:0003735">
    <property type="term" value="F:structural constituent of ribosome"/>
    <property type="evidence" value="ECO:0007669"/>
    <property type="project" value="InterPro"/>
</dbReference>
<dbReference type="GO" id="GO:0042274">
    <property type="term" value="P:ribosomal small subunit biogenesis"/>
    <property type="evidence" value="ECO:0007669"/>
    <property type="project" value="TreeGrafter"/>
</dbReference>
<dbReference type="GO" id="GO:0006412">
    <property type="term" value="P:translation"/>
    <property type="evidence" value="ECO:0007669"/>
    <property type="project" value="UniProtKB-UniRule"/>
</dbReference>
<dbReference type="CDD" id="cd00165">
    <property type="entry name" value="S4"/>
    <property type="match status" value="1"/>
</dbReference>
<dbReference type="FunFam" id="1.10.1050.10:FF:000001">
    <property type="entry name" value="30S ribosomal protein S4"/>
    <property type="match status" value="1"/>
</dbReference>
<dbReference type="FunFam" id="3.10.290.10:FF:000001">
    <property type="entry name" value="30S ribosomal protein S4"/>
    <property type="match status" value="1"/>
</dbReference>
<dbReference type="Gene3D" id="1.10.1050.10">
    <property type="entry name" value="Ribosomal Protein S4 Delta 41, Chain A, domain 1"/>
    <property type="match status" value="1"/>
</dbReference>
<dbReference type="Gene3D" id="3.10.290.10">
    <property type="entry name" value="RNA-binding S4 domain"/>
    <property type="match status" value="1"/>
</dbReference>
<dbReference type="HAMAP" id="MF_01306_B">
    <property type="entry name" value="Ribosomal_uS4_B"/>
    <property type="match status" value="1"/>
</dbReference>
<dbReference type="InterPro" id="IPR022801">
    <property type="entry name" value="Ribosomal_uS4"/>
</dbReference>
<dbReference type="InterPro" id="IPR005709">
    <property type="entry name" value="Ribosomal_uS4_bac-type"/>
</dbReference>
<dbReference type="InterPro" id="IPR018079">
    <property type="entry name" value="Ribosomal_uS4_CS"/>
</dbReference>
<dbReference type="InterPro" id="IPR001912">
    <property type="entry name" value="Ribosomal_uS4_N"/>
</dbReference>
<dbReference type="InterPro" id="IPR002942">
    <property type="entry name" value="S4_RNA-bd"/>
</dbReference>
<dbReference type="InterPro" id="IPR036986">
    <property type="entry name" value="S4_RNA-bd_sf"/>
</dbReference>
<dbReference type="NCBIfam" id="NF003717">
    <property type="entry name" value="PRK05327.1"/>
    <property type="match status" value="1"/>
</dbReference>
<dbReference type="NCBIfam" id="TIGR01017">
    <property type="entry name" value="rpsD_bact"/>
    <property type="match status" value="1"/>
</dbReference>
<dbReference type="PANTHER" id="PTHR11831">
    <property type="entry name" value="30S 40S RIBOSOMAL PROTEIN"/>
    <property type="match status" value="1"/>
</dbReference>
<dbReference type="PANTHER" id="PTHR11831:SF4">
    <property type="entry name" value="SMALL RIBOSOMAL SUBUNIT PROTEIN US4M"/>
    <property type="match status" value="1"/>
</dbReference>
<dbReference type="Pfam" id="PF00163">
    <property type="entry name" value="Ribosomal_S4"/>
    <property type="match status" value="1"/>
</dbReference>
<dbReference type="Pfam" id="PF01479">
    <property type="entry name" value="S4"/>
    <property type="match status" value="1"/>
</dbReference>
<dbReference type="SMART" id="SM01390">
    <property type="entry name" value="Ribosomal_S4"/>
    <property type="match status" value="1"/>
</dbReference>
<dbReference type="SMART" id="SM00363">
    <property type="entry name" value="S4"/>
    <property type="match status" value="1"/>
</dbReference>
<dbReference type="SUPFAM" id="SSF55174">
    <property type="entry name" value="Alpha-L RNA-binding motif"/>
    <property type="match status" value="1"/>
</dbReference>
<dbReference type="PROSITE" id="PS00632">
    <property type="entry name" value="RIBOSOMAL_S4"/>
    <property type="match status" value="1"/>
</dbReference>
<dbReference type="PROSITE" id="PS50889">
    <property type="entry name" value="S4"/>
    <property type="match status" value="1"/>
</dbReference>
<proteinExistence type="inferred from homology"/>
<name>RS4_BACC4</name>
<protein>
    <recommendedName>
        <fullName evidence="1">Small ribosomal subunit protein uS4</fullName>
    </recommendedName>
    <alternativeName>
        <fullName evidence="3">30S ribosomal protein S4</fullName>
    </alternativeName>
</protein>
<gene>
    <name evidence="1" type="primary">rpsD</name>
    <name type="ordered locus">BCB4264_A4764</name>
</gene>